<protein>
    <recommendedName>
        <fullName>Uncharacterized protein aq_271</fullName>
    </recommendedName>
</protein>
<reference key="1">
    <citation type="journal article" date="1998" name="Nature">
        <title>The complete genome of the hyperthermophilic bacterium Aquifex aeolicus.</title>
        <authorList>
            <person name="Deckert G."/>
            <person name="Warren P.V."/>
            <person name="Gaasterland T."/>
            <person name="Young W.G."/>
            <person name="Lenox A.L."/>
            <person name="Graham D.E."/>
            <person name="Overbeek R."/>
            <person name="Snead M.A."/>
            <person name="Keller M."/>
            <person name="Aujay M."/>
            <person name="Huber R."/>
            <person name="Feldman R.A."/>
            <person name="Short J.M."/>
            <person name="Olsen G.J."/>
            <person name="Swanson R.V."/>
        </authorList>
    </citation>
    <scope>NUCLEOTIDE SEQUENCE [LARGE SCALE GENOMIC DNA]</scope>
    <source>
        <strain>VF5</strain>
    </source>
</reference>
<feature type="chain" id="PRO_0000186849" description="Uncharacterized protein aq_271">
    <location>
        <begin position="1"/>
        <end position="403"/>
    </location>
</feature>
<proteinExistence type="predicted"/>
<dbReference type="EMBL" id="AE000657">
    <property type="protein sequence ID" value="AAC06586.1"/>
    <property type="molecule type" value="Genomic_DNA"/>
</dbReference>
<dbReference type="PIR" id="H70324">
    <property type="entry name" value="H70324"/>
</dbReference>
<dbReference type="RefSeq" id="NP_213188.1">
    <property type="nucleotide sequence ID" value="NC_000918.1"/>
</dbReference>
<dbReference type="RefSeq" id="WP_010880126.1">
    <property type="nucleotide sequence ID" value="NC_000918.1"/>
</dbReference>
<dbReference type="STRING" id="224324.aq_271"/>
<dbReference type="EnsemblBacteria" id="AAC06586">
    <property type="protein sequence ID" value="AAC06586"/>
    <property type="gene ID" value="aq_271"/>
</dbReference>
<dbReference type="KEGG" id="aae:aq_271"/>
<dbReference type="eggNOG" id="COG4641">
    <property type="taxonomic scope" value="Bacteria"/>
</dbReference>
<dbReference type="HOGENOM" id="CLU_675743_0_0_0"/>
<dbReference type="InParanoid" id="O66628"/>
<dbReference type="OrthoDB" id="9259at2"/>
<dbReference type="Proteomes" id="UP000000798">
    <property type="component" value="Chromosome"/>
</dbReference>
<dbReference type="Gene3D" id="3.40.50.2000">
    <property type="entry name" value="Glycogen Phosphorylase B"/>
    <property type="match status" value="1"/>
</dbReference>
<dbReference type="InterPro" id="IPR055259">
    <property type="entry name" value="YkvP/CgeB_Glyco_trans-like"/>
</dbReference>
<dbReference type="Pfam" id="PF13524">
    <property type="entry name" value="Glyco_trans_1_2"/>
    <property type="match status" value="1"/>
</dbReference>
<dbReference type="SUPFAM" id="SSF53756">
    <property type="entry name" value="UDP-Glycosyltransferase/glycogen phosphorylase"/>
    <property type="match status" value="1"/>
</dbReference>
<accession>O66628</accession>
<keyword id="KW-1185">Reference proteome</keyword>
<sequence>MKIAFLRPGKIGTPANHVYALLDYLREKGAEIREYDLKERDVNDVVKEIEEWKPLFLMDVNATGVIVAERDGKKHILADILGIVHVSVFFEDPLLFFPAFEGVEKPQNYIAFITELKHTDSLTALGIQNISYISPFVDLKQFPESEGEKDIEIAFVGPVVDPQIILNSVSQNYPQEIMPFFIETGEFMFRNPEVHILTAFNYVFGLFNPQMQEQFNKWREQNPSAFMRFLNDITAYTTMRRRMYLLHFLDGMDVKILGDYQGNLFENHEAIKVSSYEQLLKYYSRSNITVYVSPQTYPTGLSVIPLEILYMGSLPLIDFKGAIPGFLKPGEEIETFAPLDRADLEEKIVFYIEENREGINEIVQRGKKAVQERFTVKDRGEFVYNVLSDVKRQYEAAQKGQVN</sequence>
<gene>
    <name type="ordered locus">aq_271</name>
</gene>
<organism>
    <name type="scientific">Aquifex aeolicus (strain VF5)</name>
    <dbReference type="NCBI Taxonomy" id="224324"/>
    <lineage>
        <taxon>Bacteria</taxon>
        <taxon>Pseudomonadati</taxon>
        <taxon>Aquificota</taxon>
        <taxon>Aquificia</taxon>
        <taxon>Aquificales</taxon>
        <taxon>Aquificaceae</taxon>
        <taxon>Aquifex</taxon>
    </lineage>
</organism>
<name>Y271_AQUAE</name>